<protein>
    <recommendedName>
        <fullName evidence="1">Transcription elongation factor GreA</fullName>
    </recommendedName>
    <alternativeName>
        <fullName evidence="1">Transcript cleavage factor GreA</fullName>
    </alternativeName>
</protein>
<feature type="chain" id="PRO_0000176971" description="Transcription elongation factor GreA">
    <location>
        <begin position="1"/>
        <end position="158"/>
    </location>
</feature>
<feature type="coiled-coil region" evidence="1">
    <location>
        <begin position="4"/>
        <end position="70"/>
    </location>
</feature>
<comment type="function">
    <text evidence="1">Necessary for efficient RNA polymerase transcription elongation past template-encoded arresting sites. The arresting sites in DNA have the property of trapping a certain fraction of elongating RNA polymerases that pass through, resulting in locked ternary complexes. Cleavage of the nascent transcript by cleavage factors such as GreA or GreB allows the resumption of elongation from the new 3'terminus. GreA releases sequences of 2 to 3 nucleotides.</text>
</comment>
<comment type="similarity">
    <text evidence="1">Belongs to the GreA/GreB family.</text>
</comment>
<reference key="1">
    <citation type="journal article" date="2001" name="Lancet">
        <title>Whole genome sequencing of meticillin-resistant Staphylococcus aureus.</title>
        <authorList>
            <person name="Kuroda M."/>
            <person name="Ohta T."/>
            <person name="Uchiyama I."/>
            <person name="Baba T."/>
            <person name="Yuzawa H."/>
            <person name="Kobayashi I."/>
            <person name="Cui L."/>
            <person name="Oguchi A."/>
            <person name="Aoki K."/>
            <person name="Nagai Y."/>
            <person name="Lian J.-Q."/>
            <person name="Ito T."/>
            <person name="Kanamori M."/>
            <person name="Matsumaru H."/>
            <person name="Maruyama A."/>
            <person name="Murakami H."/>
            <person name="Hosoyama A."/>
            <person name="Mizutani-Ui Y."/>
            <person name="Takahashi N.K."/>
            <person name="Sawano T."/>
            <person name="Inoue R."/>
            <person name="Kaito C."/>
            <person name="Sekimizu K."/>
            <person name="Hirakawa H."/>
            <person name="Kuhara S."/>
            <person name="Goto S."/>
            <person name="Yabuzaki J."/>
            <person name="Kanehisa M."/>
            <person name="Yamashita A."/>
            <person name="Oshima K."/>
            <person name="Furuya K."/>
            <person name="Yoshino C."/>
            <person name="Shiba T."/>
            <person name="Hattori M."/>
            <person name="Ogasawara N."/>
            <person name="Hayashi H."/>
            <person name="Hiramatsu K."/>
        </authorList>
    </citation>
    <scope>NUCLEOTIDE SEQUENCE [LARGE SCALE GENOMIC DNA]</scope>
    <source>
        <strain>Mu50 / ATCC 700699</strain>
    </source>
</reference>
<gene>
    <name evidence="1" type="primary">greA</name>
    <name type="ordered locus">SAV1610</name>
</gene>
<sequence>MENQKQYPMTQEGFEKLERELEELKTVKRPEVVEKIKVARSFGDLSENSEYDAAKDEQGFIEQDIQRIEHMLRNALIIEDTGDNNVVKIGKTVTFVELPGDEEESYQIVGSAESDAFNGKISNESPMAKALIGKGLDDEVRVPLPNGGEMNVKIVNIQ</sequence>
<dbReference type="EMBL" id="BA000017">
    <property type="protein sequence ID" value="BAB57772.1"/>
    <property type="molecule type" value="Genomic_DNA"/>
</dbReference>
<dbReference type="RefSeq" id="WP_000431312.1">
    <property type="nucleotide sequence ID" value="NC_002758.2"/>
</dbReference>
<dbReference type="SMR" id="P64283"/>
<dbReference type="KEGG" id="sav:SAV1610"/>
<dbReference type="HOGENOM" id="CLU_101379_2_1_9"/>
<dbReference type="PhylomeDB" id="P64283"/>
<dbReference type="Proteomes" id="UP000002481">
    <property type="component" value="Chromosome"/>
</dbReference>
<dbReference type="GO" id="GO:0003677">
    <property type="term" value="F:DNA binding"/>
    <property type="evidence" value="ECO:0007669"/>
    <property type="project" value="UniProtKB-UniRule"/>
</dbReference>
<dbReference type="GO" id="GO:0070063">
    <property type="term" value="F:RNA polymerase binding"/>
    <property type="evidence" value="ECO:0007669"/>
    <property type="project" value="InterPro"/>
</dbReference>
<dbReference type="GO" id="GO:0006354">
    <property type="term" value="P:DNA-templated transcription elongation"/>
    <property type="evidence" value="ECO:0007669"/>
    <property type="project" value="TreeGrafter"/>
</dbReference>
<dbReference type="GO" id="GO:0032784">
    <property type="term" value="P:regulation of DNA-templated transcription elongation"/>
    <property type="evidence" value="ECO:0007669"/>
    <property type="project" value="UniProtKB-UniRule"/>
</dbReference>
<dbReference type="FunFam" id="1.10.287.180:FF:000001">
    <property type="entry name" value="Transcription elongation factor GreA"/>
    <property type="match status" value="1"/>
</dbReference>
<dbReference type="FunFam" id="3.10.50.30:FF:000001">
    <property type="entry name" value="Transcription elongation factor GreA"/>
    <property type="match status" value="1"/>
</dbReference>
<dbReference type="Gene3D" id="3.10.50.30">
    <property type="entry name" value="Transcription elongation factor, GreA/GreB, C-terminal domain"/>
    <property type="match status" value="1"/>
</dbReference>
<dbReference type="Gene3D" id="1.10.287.180">
    <property type="entry name" value="Transcription elongation factor, GreA/GreB, N-terminal domain"/>
    <property type="match status" value="1"/>
</dbReference>
<dbReference type="HAMAP" id="MF_00105">
    <property type="entry name" value="GreA_GreB"/>
    <property type="match status" value="1"/>
</dbReference>
<dbReference type="InterPro" id="IPR036953">
    <property type="entry name" value="GreA/GreB_C_sf"/>
</dbReference>
<dbReference type="InterPro" id="IPR018151">
    <property type="entry name" value="TF_GreA/GreB_CS"/>
</dbReference>
<dbReference type="InterPro" id="IPR006359">
    <property type="entry name" value="Tscrpt_elong_fac_GreA"/>
</dbReference>
<dbReference type="InterPro" id="IPR028624">
    <property type="entry name" value="Tscrpt_elong_fac_GreA/B"/>
</dbReference>
<dbReference type="InterPro" id="IPR001437">
    <property type="entry name" value="Tscrpt_elong_fac_GreA/B_C"/>
</dbReference>
<dbReference type="InterPro" id="IPR023459">
    <property type="entry name" value="Tscrpt_elong_fac_GreA/B_fam"/>
</dbReference>
<dbReference type="InterPro" id="IPR022691">
    <property type="entry name" value="Tscrpt_elong_fac_GreA/B_N"/>
</dbReference>
<dbReference type="InterPro" id="IPR036805">
    <property type="entry name" value="Tscrpt_elong_fac_GreA/B_N_sf"/>
</dbReference>
<dbReference type="NCBIfam" id="TIGR01462">
    <property type="entry name" value="greA"/>
    <property type="match status" value="1"/>
</dbReference>
<dbReference type="NCBIfam" id="NF001261">
    <property type="entry name" value="PRK00226.1-2"/>
    <property type="match status" value="1"/>
</dbReference>
<dbReference type="NCBIfam" id="NF001263">
    <property type="entry name" value="PRK00226.1-4"/>
    <property type="match status" value="1"/>
</dbReference>
<dbReference type="PANTHER" id="PTHR30437">
    <property type="entry name" value="TRANSCRIPTION ELONGATION FACTOR GREA"/>
    <property type="match status" value="1"/>
</dbReference>
<dbReference type="PANTHER" id="PTHR30437:SF4">
    <property type="entry name" value="TRANSCRIPTION ELONGATION FACTOR GREA"/>
    <property type="match status" value="1"/>
</dbReference>
<dbReference type="Pfam" id="PF01272">
    <property type="entry name" value="GreA_GreB"/>
    <property type="match status" value="1"/>
</dbReference>
<dbReference type="Pfam" id="PF03449">
    <property type="entry name" value="GreA_GreB_N"/>
    <property type="match status" value="1"/>
</dbReference>
<dbReference type="PIRSF" id="PIRSF006092">
    <property type="entry name" value="GreA_GreB"/>
    <property type="match status" value="1"/>
</dbReference>
<dbReference type="SUPFAM" id="SSF54534">
    <property type="entry name" value="FKBP-like"/>
    <property type="match status" value="1"/>
</dbReference>
<dbReference type="SUPFAM" id="SSF46557">
    <property type="entry name" value="GreA transcript cleavage protein, N-terminal domain"/>
    <property type="match status" value="1"/>
</dbReference>
<dbReference type="PROSITE" id="PS00829">
    <property type="entry name" value="GREAB_1"/>
    <property type="match status" value="1"/>
</dbReference>
<dbReference type="PROSITE" id="PS00830">
    <property type="entry name" value="GREAB_2"/>
    <property type="match status" value="1"/>
</dbReference>
<accession>P64283</accession>
<accession>Q99TN9</accession>
<evidence type="ECO:0000255" key="1">
    <source>
        <dbReference type="HAMAP-Rule" id="MF_00105"/>
    </source>
</evidence>
<name>GREA_STAAM</name>
<proteinExistence type="inferred from homology"/>
<organism>
    <name type="scientific">Staphylococcus aureus (strain Mu50 / ATCC 700699)</name>
    <dbReference type="NCBI Taxonomy" id="158878"/>
    <lineage>
        <taxon>Bacteria</taxon>
        <taxon>Bacillati</taxon>
        <taxon>Bacillota</taxon>
        <taxon>Bacilli</taxon>
        <taxon>Bacillales</taxon>
        <taxon>Staphylococcaceae</taxon>
        <taxon>Staphylococcus</taxon>
    </lineage>
</organism>
<keyword id="KW-0175">Coiled coil</keyword>
<keyword id="KW-0238">DNA-binding</keyword>
<keyword id="KW-0804">Transcription</keyword>
<keyword id="KW-0805">Transcription regulation</keyword>